<proteinExistence type="inferred from homology"/>
<keyword id="KW-0456">Lyase</keyword>
<keyword id="KW-0501">Molybdenum cofactor biosynthesis</keyword>
<keyword id="KW-1185">Reference proteome</keyword>
<sequence length="158" mass="16955">MDNKLTHFDNKGNAVMVDVSNKNETERIAIATGTVKASSETIELIKSGQIGKGDVLGVARVAGIMAMKNTSNLIPMCHPVMITGSSIDFEIDSEKNEIRITATSKVVHKTGVEMEALTGVSIAALTIYDMCKAVDKRMVIGDIHLVKKLGGKSGEFNF</sequence>
<name>MOAC_CLOPE</name>
<protein>
    <recommendedName>
        <fullName evidence="1">Cyclic pyranopterin monophosphate synthase</fullName>
        <ecNumber evidence="1">4.6.1.17</ecNumber>
    </recommendedName>
    <alternativeName>
        <fullName evidence="1">Molybdenum cofactor biosynthesis protein C</fullName>
    </alternativeName>
</protein>
<comment type="function">
    <text evidence="1">Catalyzes the conversion of (8S)-3',8-cyclo-7,8-dihydroguanosine 5'-triphosphate to cyclic pyranopterin monophosphate (cPMP).</text>
</comment>
<comment type="catalytic activity">
    <reaction evidence="1">
        <text>(8S)-3',8-cyclo-7,8-dihydroguanosine 5'-triphosphate = cyclic pyranopterin phosphate + diphosphate</text>
        <dbReference type="Rhea" id="RHEA:49580"/>
        <dbReference type="ChEBI" id="CHEBI:33019"/>
        <dbReference type="ChEBI" id="CHEBI:59648"/>
        <dbReference type="ChEBI" id="CHEBI:131766"/>
        <dbReference type="EC" id="4.6.1.17"/>
    </reaction>
</comment>
<comment type="pathway">
    <text evidence="1">Cofactor biosynthesis; molybdopterin biosynthesis.</text>
</comment>
<comment type="subunit">
    <text evidence="1">Homohexamer; trimer of dimers.</text>
</comment>
<comment type="similarity">
    <text evidence="1">Belongs to the MoaC family.</text>
</comment>
<organism>
    <name type="scientific">Clostridium perfringens (strain 13 / Type A)</name>
    <dbReference type="NCBI Taxonomy" id="195102"/>
    <lineage>
        <taxon>Bacteria</taxon>
        <taxon>Bacillati</taxon>
        <taxon>Bacillota</taxon>
        <taxon>Clostridia</taxon>
        <taxon>Eubacteriales</taxon>
        <taxon>Clostridiaceae</taxon>
        <taxon>Clostridium</taxon>
    </lineage>
</organism>
<evidence type="ECO:0000255" key="1">
    <source>
        <dbReference type="HAMAP-Rule" id="MF_01224"/>
    </source>
</evidence>
<accession>Q8XIN2</accession>
<feature type="chain" id="PRO_0000097794" description="Cyclic pyranopterin monophosphate synthase">
    <location>
        <begin position="1"/>
        <end position="158"/>
    </location>
</feature>
<feature type="active site" evidence="1">
    <location>
        <position position="129"/>
    </location>
</feature>
<feature type="binding site" evidence="1">
    <location>
        <begin position="76"/>
        <end position="78"/>
    </location>
    <ligand>
        <name>substrate</name>
    </ligand>
</feature>
<feature type="binding site" evidence="1">
    <location>
        <begin position="114"/>
        <end position="115"/>
    </location>
    <ligand>
        <name>substrate</name>
    </ligand>
</feature>
<dbReference type="EC" id="4.6.1.17" evidence="1"/>
<dbReference type="EMBL" id="BA000016">
    <property type="protein sequence ID" value="BAB81789.1"/>
    <property type="molecule type" value="Genomic_DNA"/>
</dbReference>
<dbReference type="RefSeq" id="WP_003470675.1">
    <property type="nucleotide sequence ID" value="NC_003366.1"/>
</dbReference>
<dbReference type="SMR" id="Q8XIN2"/>
<dbReference type="STRING" id="195102.gene:10491353"/>
<dbReference type="GeneID" id="93001379"/>
<dbReference type="KEGG" id="cpe:CPE2083"/>
<dbReference type="HOGENOM" id="CLU_074693_1_1_9"/>
<dbReference type="UniPathway" id="UPA00344"/>
<dbReference type="Proteomes" id="UP000000818">
    <property type="component" value="Chromosome"/>
</dbReference>
<dbReference type="GO" id="GO:0061799">
    <property type="term" value="F:cyclic pyranopterin monophosphate synthase activity"/>
    <property type="evidence" value="ECO:0007669"/>
    <property type="project" value="UniProtKB-UniRule"/>
</dbReference>
<dbReference type="GO" id="GO:0006777">
    <property type="term" value="P:Mo-molybdopterin cofactor biosynthetic process"/>
    <property type="evidence" value="ECO:0007669"/>
    <property type="project" value="UniProtKB-UniRule"/>
</dbReference>
<dbReference type="CDD" id="cd01420">
    <property type="entry name" value="MoaC_PE"/>
    <property type="match status" value="1"/>
</dbReference>
<dbReference type="Gene3D" id="3.30.70.640">
    <property type="entry name" value="Molybdopterin cofactor biosynthesis C (MoaC) domain"/>
    <property type="match status" value="1"/>
</dbReference>
<dbReference type="HAMAP" id="MF_01224_B">
    <property type="entry name" value="MoaC_B"/>
    <property type="match status" value="1"/>
</dbReference>
<dbReference type="InterPro" id="IPR023045">
    <property type="entry name" value="MoaC"/>
</dbReference>
<dbReference type="InterPro" id="IPR047594">
    <property type="entry name" value="MoaC_bact/euk"/>
</dbReference>
<dbReference type="InterPro" id="IPR036522">
    <property type="entry name" value="MoaC_sf"/>
</dbReference>
<dbReference type="InterPro" id="IPR050105">
    <property type="entry name" value="MoCo_biosynth_MoaA/MoaC"/>
</dbReference>
<dbReference type="InterPro" id="IPR002820">
    <property type="entry name" value="Mopterin_CF_biosynth-C_dom"/>
</dbReference>
<dbReference type="NCBIfam" id="TIGR00581">
    <property type="entry name" value="moaC"/>
    <property type="match status" value="1"/>
</dbReference>
<dbReference type="NCBIfam" id="NF006870">
    <property type="entry name" value="PRK09364.1"/>
    <property type="match status" value="1"/>
</dbReference>
<dbReference type="PANTHER" id="PTHR22960:SF29">
    <property type="entry name" value="CYCLIC PYRANOPTERIN MONOPHOSPHATE SYNTHASE"/>
    <property type="match status" value="1"/>
</dbReference>
<dbReference type="PANTHER" id="PTHR22960">
    <property type="entry name" value="MOLYBDOPTERIN COFACTOR SYNTHESIS PROTEIN A"/>
    <property type="match status" value="1"/>
</dbReference>
<dbReference type="Pfam" id="PF01967">
    <property type="entry name" value="MoaC"/>
    <property type="match status" value="1"/>
</dbReference>
<dbReference type="SUPFAM" id="SSF55040">
    <property type="entry name" value="Molybdenum cofactor biosynthesis protein C, MoaC"/>
    <property type="match status" value="1"/>
</dbReference>
<reference key="1">
    <citation type="journal article" date="2002" name="Proc. Natl. Acad. Sci. U.S.A.">
        <title>Complete genome sequence of Clostridium perfringens, an anaerobic flesh-eater.</title>
        <authorList>
            <person name="Shimizu T."/>
            <person name="Ohtani K."/>
            <person name="Hirakawa H."/>
            <person name="Ohshima K."/>
            <person name="Yamashita A."/>
            <person name="Shiba T."/>
            <person name="Ogasawara N."/>
            <person name="Hattori M."/>
            <person name="Kuhara S."/>
            <person name="Hayashi H."/>
        </authorList>
    </citation>
    <scope>NUCLEOTIDE SEQUENCE [LARGE SCALE GENOMIC DNA]</scope>
    <source>
        <strain>13 / Type A</strain>
    </source>
</reference>
<gene>
    <name evidence="1" type="primary">moaC</name>
    <name type="ordered locus">CPE2083</name>
</gene>